<name>NU2C1_CITSI</name>
<gene>
    <name evidence="1" type="primary">ndhB1</name>
</gene>
<organism>
    <name type="scientific">Citrus sinensis</name>
    <name type="common">Sweet orange</name>
    <name type="synonym">Citrus aurantium var. sinensis</name>
    <dbReference type="NCBI Taxonomy" id="2711"/>
    <lineage>
        <taxon>Eukaryota</taxon>
        <taxon>Viridiplantae</taxon>
        <taxon>Streptophyta</taxon>
        <taxon>Embryophyta</taxon>
        <taxon>Tracheophyta</taxon>
        <taxon>Spermatophyta</taxon>
        <taxon>Magnoliopsida</taxon>
        <taxon>eudicotyledons</taxon>
        <taxon>Gunneridae</taxon>
        <taxon>Pentapetalae</taxon>
        <taxon>rosids</taxon>
        <taxon>malvids</taxon>
        <taxon>Sapindales</taxon>
        <taxon>Rutaceae</taxon>
        <taxon>Aurantioideae</taxon>
        <taxon>Citrus</taxon>
    </lineage>
</organism>
<reference key="1">
    <citation type="journal article" date="2006" name="BMC Plant Biol.">
        <title>The complete chloroplast genome sequence of Citrus sinensis (L.) Osbeck var 'Ridge Pineapple': organization and phylogenetic relationships to other angiosperms.</title>
        <authorList>
            <person name="Bausher M.G."/>
            <person name="Singh N.D."/>
            <person name="Lee S.-B."/>
            <person name="Jansen R.K."/>
            <person name="Daniell H."/>
        </authorList>
    </citation>
    <scope>NUCLEOTIDE SEQUENCE [LARGE SCALE GENOMIC DNA]</scope>
    <source>
        <strain>cv. Osbeck var. Ridge Pineapple</strain>
    </source>
</reference>
<evidence type="ECO:0000255" key="1">
    <source>
        <dbReference type="HAMAP-Rule" id="MF_00445"/>
    </source>
</evidence>
<proteinExistence type="inferred from homology"/>
<sequence length="510" mass="56530">MIWHVQNENFILDSTRIFMKAFHLLLFDGSFIFPECILIFGLILLLMIDSTSDQKDIPWLYFISSTSLVMSITALLFRWREEPMISFSGNFQTNNFNEIFQFLILLCSTLCIPLSVEYIECTEMAITEFLLFVLTATLGGMFLCGANDLITIFVAPECFSLCSYLLSGYTKKDVRSNEATMKYLLMGGASSSILVHGFSWLYGSSGGEIELQEIVNGLINTQMYNSPGISIALIFITVGIGFKLSLAPSHQWTPDVYEGSPTPVVAFLSVTSKVAASASATRIFDIPFYFSSNEWHLLLEILAILSMILGNLIAITQTSMKRMLAYSSIGQIGYVIIGIIVGDSNGGYASMITYMLFYISMNLGTFACIVLFGLRTGTDNIRDYAGLYTKDPFLALSLALCLLSLGGLPPLAGFFGKLHLFWCGWQAGLYFLVSIGLLTSVVSIYYYLKIIKLLMTGRKQEITPHVRNYRGSPLRSNNSIELSMIVCVIASTILGISMNPIIAIAQDTLF</sequence>
<protein>
    <recommendedName>
        <fullName evidence="1">NAD(P)H-quinone oxidoreductase subunit 2 A, chloroplastic</fullName>
        <ecNumber evidence="1">7.1.1.-</ecNumber>
    </recommendedName>
    <alternativeName>
        <fullName evidence="1">NAD(P)H dehydrogenase, subunit 2 A</fullName>
    </alternativeName>
    <alternativeName>
        <fullName evidence="1">NADH-plastoquinone oxidoreductase subunit 2 A</fullName>
    </alternativeName>
</protein>
<feature type="chain" id="PRO_0000275592" description="NAD(P)H-quinone oxidoreductase subunit 2 A, chloroplastic">
    <location>
        <begin position="1"/>
        <end position="510"/>
    </location>
</feature>
<feature type="transmembrane region" description="Helical" evidence="1">
    <location>
        <begin position="24"/>
        <end position="44"/>
    </location>
</feature>
<feature type="transmembrane region" description="Helical" evidence="1">
    <location>
        <begin position="57"/>
        <end position="77"/>
    </location>
</feature>
<feature type="transmembrane region" description="Helical" evidence="1">
    <location>
        <begin position="99"/>
        <end position="119"/>
    </location>
</feature>
<feature type="transmembrane region" description="Helical" evidence="1">
    <location>
        <begin position="124"/>
        <end position="144"/>
    </location>
</feature>
<feature type="transmembrane region" description="Helical" evidence="1">
    <location>
        <begin position="149"/>
        <end position="169"/>
    </location>
</feature>
<feature type="transmembrane region" description="Helical" evidence="1">
    <location>
        <begin position="183"/>
        <end position="203"/>
    </location>
</feature>
<feature type="transmembrane region" description="Helical" evidence="1">
    <location>
        <begin position="227"/>
        <end position="247"/>
    </location>
</feature>
<feature type="transmembrane region" description="Helical" evidence="1">
    <location>
        <begin position="295"/>
        <end position="315"/>
    </location>
</feature>
<feature type="transmembrane region" description="Helical" evidence="1">
    <location>
        <begin position="323"/>
        <end position="343"/>
    </location>
</feature>
<feature type="transmembrane region" description="Helical" evidence="1">
    <location>
        <begin position="354"/>
        <end position="374"/>
    </location>
</feature>
<feature type="transmembrane region" description="Helical" evidence="1">
    <location>
        <begin position="395"/>
        <end position="415"/>
    </location>
</feature>
<feature type="transmembrane region" description="Helical" evidence="1">
    <location>
        <begin position="418"/>
        <end position="438"/>
    </location>
</feature>
<feature type="transmembrane region" description="Helical" evidence="1">
    <location>
        <begin position="484"/>
        <end position="504"/>
    </location>
</feature>
<comment type="function">
    <text evidence="1">NDH shuttles electrons from NAD(P)H:plastoquinone, via FMN and iron-sulfur (Fe-S) centers, to quinones in the photosynthetic chain and possibly in a chloroplast respiratory chain. The immediate electron acceptor for the enzyme in this species is believed to be plastoquinone. Couples the redox reaction to proton translocation, and thus conserves the redox energy in a proton gradient.</text>
</comment>
<comment type="catalytic activity">
    <reaction evidence="1">
        <text>a plastoquinone + NADH + (n+1) H(+)(in) = a plastoquinol + NAD(+) + n H(+)(out)</text>
        <dbReference type="Rhea" id="RHEA:42608"/>
        <dbReference type="Rhea" id="RHEA-COMP:9561"/>
        <dbReference type="Rhea" id="RHEA-COMP:9562"/>
        <dbReference type="ChEBI" id="CHEBI:15378"/>
        <dbReference type="ChEBI" id="CHEBI:17757"/>
        <dbReference type="ChEBI" id="CHEBI:57540"/>
        <dbReference type="ChEBI" id="CHEBI:57945"/>
        <dbReference type="ChEBI" id="CHEBI:62192"/>
    </reaction>
</comment>
<comment type="catalytic activity">
    <reaction evidence="1">
        <text>a plastoquinone + NADPH + (n+1) H(+)(in) = a plastoquinol + NADP(+) + n H(+)(out)</text>
        <dbReference type="Rhea" id="RHEA:42612"/>
        <dbReference type="Rhea" id="RHEA-COMP:9561"/>
        <dbReference type="Rhea" id="RHEA-COMP:9562"/>
        <dbReference type="ChEBI" id="CHEBI:15378"/>
        <dbReference type="ChEBI" id="CHEBI:17757"/>
        <dbReference type="ChEBI" id="CHEBI:57783"/>
        <dbReference type="ChEBI" id="CHEBI:58349"/>
        <dbReference type="ChEBI" id="CHEBI:62192"/>
    </reaction>
</comment>
<comment type="subunit">
    <text evidence="1">NDH is composed of at least 16 different subunits, 5 of which are encoded in the nucleus.</text>
</comment>
<comment type="subcellular location">
    <subcellularLocation>
        <location evidence="1">Plastid</location>
        <location evidence="1">Chloroplast thylakoid membrane</location>
        <topology evidence="1">Multi-pass membrane protein</topology>
    </subcellularLocation>
</comment>
<comment type="similarity">
    <text evidence="1">Belongs to the complex I subunit 2 family.</text>
</comment>
<geneLocation type="chloroplast"/>
<accession>P0CC46</accession>
<accession>Q09MB6</accession>
<keyword id="KW-0150">Chloroplast</keyword>
<keyword id="KW-0472">Membrane</keyword>
<keyword id="KW-0520">NAD</keyword>
<keyword id="KW-0521">NADP</keyword>
<keyword id="KW-0934">Plastid</keyword>
<keyword id="KW-0618">Plastoquinone</keyword>
<keyword id="KW-0874">Quinone</keyword>
<keyword id="KW-0793">Thylakoid</keyword>
<keyword id="KW-1278">Translocase</keyword>
<keyword id="KW-0812">Transmembrane</keyword>
<keyword id="KW-1133">Transmembrane helix</keyword>
<keyword id="KW-0813">Transport</keyword>
<dbReference type="EC" id="7.1.1.-" evidence="1"/>
<dbReference type="EMBL" id="DQ864733">
    <property type="protein sequence ID" value="ABI49064.1"/>
    <property type="molecule type" value="Genomic_DNA"/>
</dbReference>
<dbReference type="SMR" id="P0CC46"/>
<dbReference type="KEGG" id="cit:4271162"/>
<dbReference type="KEGG" id="cit:4271170"/>
<dbReference type="OrthoDB" id="916715at71240"/>
<dbReference type="GO" id="GO:0009535">
    <property type="term" value="C:chloroplast thylakoid membrane"/>
    <property type="evidence" value="ECO:0007669"/>
    <property type="project" value="UniProtKB-SubCell"/>
</dbReference>
<dbReference type="GO" id="GO:0008137">
    <property type="term" value="F:NADH dehydrogenase (ubiquinone) activity"/>
    <property type="evidence" value="ECO:0007669"/>
    <property type="project" value="InterPro"/>
</dbReference>
<dbReference type="GO" id="GO:0048038">
    <property type="term" value="F:quinone binding"/>
    <property type="evidence" value="ECO:0007669"/>
    <property type="project" value="UniProtKB-KW"/>
</dbReference>
<dbReference type="GO" id="GO:0042773">
    <property type="term" value="P:ATP synthesis coupled electron transport"/>
    <property type="evidence" value="ECO:0007669"/>
    <property type="project" value="InterPro"/>
</dbReference>
<dbReference type="GO" id="GO:0019684">
    <property type="term" value="P:photosynthesis, light reaction"/>
    <property type="evidence" value="ECO:0007669"/>
    <property type="project" value="UniProtKB-UniRule"/>
</dbReference>
<dbReference type="HAMAP" id="MF_00445">
    <property type="entry name" value="NDH1_NuoN_1"/>
    <property type="match status" value="1"/>
</dbReference>
<dbReference type="InterPro" id="IPR010096">
    <property type="entry name" value="NADH-Q_OxRdtase_suN/2"/>
</dbReference>
<dbReference type="InterPro" id="IPR001750">
    <property type="entry name" value="ND/Mrp_TM"/>
</dbReference>
<dbReference type="InterPro" id="IPR045693">
    <property type="entry name" value="Ndh2_N"/>
</dbReference>
<dbReference type="NCBIfam" id="TIGR01770">
    <property type="entry name" value="NDH_I_N"/>
    <property type="match status" value="1"/>
</dbReference>
<dbReference type="NCBIfam" id="NF002701">
    <property type="entry name" value="PRK02504.1"/>
    <property type="match status" value="1"/>
</dbReference>
<dbReference type="PANTHER" id="PTHR22773">
    <property type="entry name" value="NADH DEHYDROGENASE"/>
    <property type="match status" value="1"/>
</dbReference>
<dbReference type="Pfam" id="PF19530">
    <property type="entry name" value="Ndh2_N"/>
    <property type="match status" value="1"/>
</dbReference>
<dbReference type="Pfam" id="PF00361">
    <property type="entry name" value="Proton_antipo_M"/>
    <property type="match status" value="1"/>
</dbReference>